<reference key="1">
    <citation type="journal article" date="2011" name="J. Bacteriol.">
        <title>Genome sequence of lineage III Listeria monocytogenes strain HCC23.</title>
        <authorList>
            <person name="Steele C.L."/>
            <person name="Donaldson J.R."/>
            <person name="Paul D."/>
            <person name="Banes M.M."/>
            <person name="Arick T."/>
            <person name="Bridges S.M."/>
            <person name="Lawrence M.L."/>
        </authorList>
    </citation>
    <scope>NUCLEOTIDE SEQUENCE [LARGE SCALE GENOMIC DNA]</scope>
    <source>
        <strain>HCC23</strain>
    </source>
</reference>
<evidence type="ECO:0000255" key="1">
    <source>
        <dbReference type="HAMAP-Rule" id="MF_00394"/>
    </source>
</evidence>
<comment type="function">
    <text evidence="1">Catalyzes the reduction of the glycolytic intermediate dihydroxyacetone phosphate (DHAP) to sn-glycerol 3-phosphate (G3P), the key precursor for phospholipid synthesis.</text>
</comment>
<comment type="catalytic activity">
    <reaction evidence="1">
        <text>sn-glycerol 3-phosphate + NAD(+) = dihydroxyacetone phosphate + NADH + H(+)</text>
        <dbReference type="Rhea" id="RHEA:11092"/>
        <dbReference type="ChEBI" id="CHEBI:15378"/>
        <dbReference type="ChEBI" id="CHEBI:57540"/>
        <dbReference type="ChEBI" id="CHEBI:57597"/>
        <dbReference type="ChEBI" id="CHEBI:57642"/>
        <dbReference type="ChEBI" id="CHEBI:57945"/>
        <dbReference type="EC" id="1.1.1.94"/>
    </reaction>
    <physiologicalReaction direction="right-to-left" evidence="1">
        <dbReference type="Rhea" id="RHEA:11094"/>
    </physiologicalReaction>
</comment>
<comment type="catalytic activity">
    <reaction evidence="1">
        <text>sn-glycerol 3-phosphate + NADP(+) = dihydroxyacetone phosphate + NADPH + H(+)</text>
        <dbReference type="Rhea" id="RHEA:11096"/>
        <dbReference type="ChEBI" id="CHEBI:15378"/>
        <dbReference type="ChEBI" id="CHEBI:57597"/>
        <dbReference type="ChEBI" id="CHEBI:57642"/>
        <dbReference type="ChEBI" id="CHEBI:57783"/>
        <dbReference type="ChEBI" id="CHEBI:58349"/>
        <dbReference type="EC" id="1.1.1.94"/>
    </reaction>
    <physiologicalReaction direction="right-to-left" evidence="1">
        <dbReference type="Rhea" id="RHEA:11098"/>
    </physiologicalReaction>
</comment>
<comment type="pathway">
    <text evidence="1">Membrane lipid metabolism; glycerophospholipid metabolism.</text>
</comment>
<comment type="subcellular location">
    <subcellularLocation>
        <location evidence="1">Cytoplasm</location>
    </subcellularLocation>
</comment>
<comment type="similarity">
    <text evidence="1">Belongs to the NAD-dependent glycerol-3-phosphate dehydrogenase family.</text>
</comment>
<name>GPDA_LISMH</name>
<keyword id="KW-0963">Cytoplasm</keyword>
<keyword id="KW-0444">Lipid biosynthesis</keyword>
<keyword id="KW-0443">Lipid metabolism</keyword>
<keyword id="KW-0520">NAD</keyword>
<keyword id="KW-0521">NADP</keyword>
<keyword id="KW-0547">Nucleotide-binding</keyword>
<keyword id="KW-0560">Oxidoreductase</keyword>
<keyword id="KW-0594">Phospholipid biosynthesis</keyword>
<keyword id="KW-1208">Phospholipid metabolism</keyword>
<dbReference type="EC" id="1.1.1.94" evidence="1"/>
<dbReference type="EMBL" id="CP001175">
    <property type="protein sequence ID" value="ACK38976.1"/>
    <property type="molecule type" value="Genomic_DNA"/>
</dbReference>
<dbReference type="RefSeq" id="WP_003728760.1">
    <property type="nucleotide sequence ID" value="NC_011660.1"/>
</dbReference>
<dbReference type="SMR" id="B8DBZ0"/>
<dbReference type="KEGG" id="lmh:LMHCC_0620"/>
<dbReference type="HOGENOM" id="CLU_033449_0_2_9"/>
<dbReference type="UniPathway" id="UPA00940"/>
<dbReference type="GO" id="GO:0005829">
    <property type="term" value="C:cytosol"/>
    <property type="evidence" value="ECO:0007669"/>
    <property type="project" value="TreeGrafter"/>
</dbReference>
<dbReference type="GO" id="GO:0047952">
    <property type="term" value="F:glycerol-3-phosphate dehydrogenase [NAD(P)+] activity"/>
    <property type="evidence" value="ECO:0007669"/>
    <property type="project" value="UniProtKB-UniRule"/>
</dbReference>
<dbReference type="GO" id="GO:0051287">
    <property type="term" value="F:NAD binding"/>
    <property type="evidence" value="ECO:0007669"/>
    <property type="project" value="InterPro"/>
</dbReference>
<dbReference type="GO" id="GO:0005975">
    <property type="term" value="P:carbohydrate metabolic process"/>
    <property type="evidence" value="ECO:0007669"/>
    <property type="project" value="InterPro"/>
</dbReference>
<dbReference type="GO" id="GO:0046167">
    <property type="term" value="P:glycerol-3-phosphate biosynthetic process"/>
    <property type="evidence" value="ECO:0007669"/>
    <property type="project" value="UniProtKB-UniRule"/>
</dbReference>
<dbReference type="GO" id="GO:0046168">
    <property type="term" value="P:glycerol-3-phosphate catabolic process"/>
    <property type="evidence" value="ECO:0007669"/>
    <property type="project" value="InterPro"/>
</dbReference>
<dbReference type="GO" id="GO:0006650">
    <property type="term" value="P:glycerophospholipid metabolic process"/>
    <property type="evidence" value="ECO:0007669"/>
    <property type="project" value="UniProtKB-UniRule"/>
</dbReference>
<dbReference type="GO" id="GO:0008654">
    <property type="term" value="P:phospholipid biosynthetic process"/>
    <property type="evidence" value="ECO:0007669"/>
    <property type="project" value="UniProtKB-KW"/>
</dbReference>
<dbReference type="FunFam" id="1.10.1040.10:FF:000001">
    <property type="entry name" value="Glycerol-3-phosphate dehydrogenase [NAD(P)+]"/>
    <property type="match status" value="1"/>
</dbReference>
<dbReference type="FunFam" id="3.40.50.720:FF:000019">
    <property type="entry name" value="Glycerol-3-phosphate dehydrogenase [NAD(P)+]"/>
    <property type="match status" value="1"/>
</dbReference>
<dbReference type="Gene3D" id="1.10.1040.10">
    <property type="entry name" value="N-(1-d-carboxylethyl)-l-norvaline Dehydrogenase, domain 2"/>
    <property type="match status" value="1"/>
</dbReference>
<dbReference type="Gene3D" id="3.40.50.720">
    <property type="entry name" value="NAD(P)-binding Rossmann-like Domain"/>
    <property type="match status" value="1"/>
</dbReference>
<dbReference type="HAMAP" id="MF_00394">
    <property type="entry name" value="NAD_Glyc3P_dehydrog"/>
    <property type="match status" value="1"/>
</dbReference>
<dbReference type="InterPro" id="IPR008927">
    <property type="entry name" value="6-PGluconate_DH-like_C_sf"/>
</dbReference>
<dbReference type="InterPro" id="IPR013328">
    <property type="entry name" value="6PGD_dom2"/>
</dbReference>
<dbReference type="InterPro" id="IPR006168">
    <property type="entry name" value="G3P_DH_NAD-dep"/>
</dbReference>
<dbReference type="InterPro" id="IPR006109">
    <property type="entry name" value="G3P_DH_NAD-dep_C"/>
</dbReference>
<dbReference type="InterPro" id="IPR011128">
    <property type="entry name" value="G3P_DH_NAD-dep_N"/>
</dbReference>
<dbReference type="InterPro" id="IPR036291">
    <property type="entry name" value="NAD(P)-bd_dom_sf"/>
</dbReference>
<dbReference type="NCBIfam" id="NF000940">
    <property type="entry name" value="PRK00094.1-2"/>
    <property type="match status" value="1"/>
</dbReference>
<dbReference type="NCBIfam" id="NF000941">
    <property type="entry name" value="PRK00094.1-3"/>
    <property type="match status" value="1"/>
</dbReference>
<dbReference type="NCBIfam" id="NF000942">
    <property type="entry name" value="PRK00094.1-4"/>
    <property type="match status" value="1"/>
</dbReference>
<dbReference type="PANTHER" id="PTHR11728">
    <property type="entry name" value="GLYCEROL-3-PHOSPHATE DEHYDROGENASE"/>
    <property type="match status" value="1"/>
</dbReference>
<dbReference type="PANTHER" id="PTHR11728:SF1">
    <property type="entry name" value="GLYCEROL-3-PHOSPHATE DEHYDROGENASE [NAD(+)] 2, CHLOROPLASTIC"/>
    <property type="match status" value="1"/>
</dbReference>
<dbReference type="Pfam" id="PF07479">
    <property type="entry name" value="NAD_Gly3P_dh_C"/>
    <property type="match status" value="1"/>
</dbReference>
<dbReference type="Pfam" id="PF01210">
    <property type="entry name" value="NAD_Gly3P_dh_N"/>
    <property type="match status" value="1"/>
</dbReference>
<dbReference type="PIRSF" id="PIRSF000114">
    <property type="entry name" value="Glycerol-3-P_dh"/>
    <property type="match status" value="1"/>
</dbReference>
<dbReference type="PRINTS" id="PR00077">
    <property type="entry name" value="GPDHDRGNASE"/>
</dbReference>
<dbReference type="SUPFAM" id="SSF48179">
    <property type="entry name" value="6-phosphogluconate dehydrogenase C-terminal domain-like"/>
    <property type="match status" value="1"/>
</dbReference>
<dbReference type="SUPFAM" id="SSF51735">
    <property type="entry name" value="NAD(P)-binding Rossmann-fold domains"/>
    <property type="match status" value="1"/>
</dbReference>
<dbReference type="PROSITE" id="PS00957">
    <property type="entry name" value="NAD_G3PDH"/>
    <property type="match status" value="1"/>
</dbReference>
<sequence>MTQKKVAILGAGSWGTGLALVLADNNHKPVIWGNLDKIVNEINESHTNSHYLPDIILPTEVKATLSLDEAIDGAEIVVIAIPTNAMRIVCKQLNEALKEPTILVHVSKGIEPETNLRMSEVIEEEIDAAKRKALVVLSGPSHAEEVALRHPTTLCASCKDLTAAEIVQDRFINNNLRIYTNDDVIGAEIGGALKNIIALGAGISDGLGYGDNAKAALMTRGMAEITRLGVAVGSNPQTFYGLTGIGDLIVTCTSVHSRNWRAGNMLGKGENLDEVLEKMGMVVEGVRTAKAVHGWAKKLDIDMPITESIYAILFENKDAREAVDLLMGRKKKIEKESF</sequence>
<accession>B8DBZ0</accession>
<feature type="chain" id="PRO_1000190165" description="Glycerol-3-phosphate dehydrogenase [NAD(P)+]">
    <location>
        <begin position="1"/>
        <end position="338"/>
    </location>
</feature>
<feature type="active site" description="Proton acceptor" evidence="1">
    <location>
        <position position="194"/>
    </location>
</feature>
<feature type="binding site" evidence="1">
    <location>
        <position position="13"/>
    </location>
    <ligand>
        <name>NADPH</name>
        <dbReference type="ChEBI" id="CHEBI:57783"/>
    </ligand>
</feature>
<feature type="binding site" evidence="1">
    <location>
        <position position="14"/>
    </location>
    <ligand>
        <name>NADPH</name>
        <dbReference type="ChEBI" id="CHEBI:57783"/>
    </ligand>
</feature>
<feature type="binding site" evidence="1">
    <location>
        <position position="108"/>
    </location>
    <ligand>
        <name>NADPH</name>
        <dbReference type="ChEBI" id="CHEBI:57783"/>
    </ligand>
</feature>
<feature type="binding site" evidence="1">
    <location>
        <position position="108"/>
    </location>
    <ligand>
        <name>sn-glycerol 3-phosphate</name>
        <dbReference type="ChEBI" id="CHEBI:57597"/>
    </ligand>
</feature>
<feature type="binding site" evidence="1">
    <location>
        <position position="139"/>
    </location>
    <ligand>
        <name>sn-glycerol 3-phosphate</name>
        <dbReference type="ChEBI" id="CHEBI:57597"/>
    </ligand>
</feature>
<feature type="binding site" evidence="1">
    <location>
        <position position="141"/>
    </location>
    <ligand>
        <name>sn-glycerol 3-phosphate</name>
        <dbReference type="ChEBI" id="CHEBI:57597"/>
    </ligand>
</feature>
<feature type="binding site" evidence="1">
    <location>
        <position position="143"/>
    </location>
    <ligand>
        <name>NADPH</name>
        <dbReference type="ChEBI" id="CHEBI:57783"/>
    </ligand>
</feature>
<feature type="binding site" evidence="1">
    <location>
        <position position="194"/>
    </location>
    <ligand>
        <name>sn-glycerol 3-phosphate</name>
        <dbReference type="ChEBI" id="CHEBI:57597"/>
    </ligand>
</feature>
<feature type="binding site" evidence="1">
    <location>
        <position position="247"/>
    </location>
    <ligand>
        <name>sn-glycerol 3-phosphate</name>
        <dbReference type="ChEBI" id="CHEBI:57597"/>
    </ligand>
</feature>
<feature type="binding site" evidence="1">
    <location>
        <position position="257"/>
    </location>
    <ligand>
        <name>sn-glycerol 3-phosphate</name>
        <dbReference type="ChEBI" id="CHEBI:57597"/>
    </ligand>
</feature>
<feature type="binding site" evidence="1">
    <location>
        <position position="258"/>
    </location>
    <ligand>
        <name>NADPH</name>
        <dbReference type="ChEBI" id="CHEBI:57783"/>
    </ligand>
</feature>
<feature type="binding site" evidence="1">
    <location>
        <position position="258"/>
    </location>
    <ligand>
        <name>sn-glycerol 3-phosphate</name>
        <dbReference type="ChEBI" id="CHEBI:57597"/>
    </ligand>
</feature>
<feature type="binding site" evidence="1">
    <location>
        <position position="259"/>
    </location>
    <ligand>
        <name>sn-glycerol 3-phosphate</name>
        <dbReference type="ChEBI" id="CHEBI:57597"/>
    </ligand>
</feature>
<feature type="binding site" evidence="1">
    <location>
        <position position="282"/>
    </location>
    <ligand>
        <name>NADPH</name>
        <dbReference type="ChEBI" id="CHEBI:57783"/>
    </ligand>
</feature>
<feature type="binding site" evidence="1">
    <location>
        <position position="284"/>
    </location>
    <ligand>
        <name>NADPH</name>
        <dbReference type="ChEBI" id="CHEBI:57783"/>
    </ligand>
</feature>
<organism>
    <name type="scientific">Listeria monocytogenes serotype 4a (strain HCC23)</name>
    <dbReference type="NCBI Taxonomy" id="552536"/>
    <lineage>
        <taxon>Bacteria</taxon>
        <taxon>Bacillati</taxon>
        <taxon>Bacillota</taxon>
        <taxon>Bacilli</taxon>
        <taxon>Bacillales</taxon>
        <taxon>Listeriaceae</taxon>
        <taxon>Listeria</taxon>
    </lineage>
</organism>
<protein>
    <recommendedName>
        <fullName evidence="1">Glycerol-3-phosphate dehydrogenase [NAD(P)+]</fullName>
        <ecNumber evidence="1">1.1.1.94</ecNumber>
    </recommendedName>
    <alternativeName>
        <fullName evidence="1">NAD(P)(+)-dependent glycerol-3-phosphate dehydrogenase</fullName>
    </alternativeName>
    <alternativeName>
        <fullName evidence="1">NAD(P)H-dependent dihydroxyacetone-phosphate reductase</fullName>
    </alternativeName>
</protein>
<gene>
    <name evidence="1" type="primary">gpsA</name>
    <name type="ordered locus">LMHCC_0620</name>
</gene>
<proteinExistence type="inferred from homology"/>